<organism>
    <name type="scientific">Saccharomyces cerevisiae (strain ATCC 204508 / S288c)</name>
    <name type="common">Baker's yeast</name>
    <dbReference type="NCBI Taxonomy" id="559292"/>
    <lineage>
        <taxon>Eukaryota</taxon>
        <taxon>Fungi</taxon>
        <taxon>Dikarya</taxon>
        <taxon>Ascomycota</taxon>
        <taxon>Saccharomycotina</taxon>
        <taxon>Saccharomycetes</taxon>
        <taxon>Saccharomycetales</taxon>
        <taxon>Saccharomycetaceae</taxon>
        <taxon>Saccharomyces</taxon>
    </lineage>
</organism>
<evidence type="ECO:0000269" key="1">
    <source>
    </source>
</evidence>
<evidence type="ECO:0000269" key="2">
    <source>
    </source>
</evidence>
<evidence type="ECO:0000269" key="3">
    <source>
    </source>
</evidence>
<evidence type="ECO:0000269" key="4">
    <source>
    </source>
</evidence>
<evidence type="ECO:0000269" key="5">
    <source>
    </source>
</evidence>
<evidence type="ECO:0000269" key="6">
    <source>
    </source>
</evidence>
<evidence type="ECO:0000269" key="7">
    <source>
    </source>
</evidence>
<evidence type="ECO:0000269" key="8">
    <source>
    </source>
</evidence>
<evidence type="ECO:0000269" key="9">
    <source>
    </source>
</evidence>
<evidence type="ECO:0000269" key="10">
    <source>
    </source>
</evidence>
<evidence type="ECO:0000269" key="11">
    <source>
    </source>
</evidence>
<evidence type="ECO:0000269" key="12">
    <source>
    </source>
</evidence>
<evidence type="ECO:0000269" key="13">
    <source>
    </source>
</evidence>
<evidence type="ECO:0000305" key="14"/>
<evidence type="ECO:0000305" key="15">
    <source>
    </source>
</evidence>
<evidence type="ECO:0007744" key="16">
    <source>
    </source>
</evidence>
<evidence type="ECO:0007829" key="17">
    <source>
        <dbReference type="PDB" id="4PVC"/>
    </source>
</evidence>
<accession>Q12068</accession>
<accession>D6W1R9</accession>
<gene>
    <name type="primary">GRE2</name>
    <name type="ordered locus">YOL151W</name>
</gene>
<comment type="function">
    <text evidence="4 7 8 13">Catalyzes the irreversible reduction of the cytotoxic compound methylglyoxal (MG, 2-oxopropanal) to (S)-lactaldehyde as an alternative to detoxification of MG by glyoxalase I GLO1. MG is synthesized via a bypath of glycolysis from dihydroxyacetone phosphate and is believed to play a role in cell cycle regulation and stress adaptation (PubMed:12722185, PubMed:3896793). Also catalyzes the reduction of 3-methylbutanal to 3-methylbutanol. Acts as a suppressor of 3-methylbutanol-induced filamentation by modulating the levels of 3-methylbutanal, the signal to which cells respond by filamentation (PubMed:16999827). Also involved in ergosterol metabolism (PubMed:16598690).</text>
</comment>
<comment type="catalytic activity">
    <reaction evidence="4 8 13">
        <text>(S)-lactaldehyde + NADP(+) = methylglyoxal + NADPH + H(+)</text>
        <dbReference type="Rhea" id="RHEA:21748"/>
        <dbReference type="ChEBI" id="CHEBI:15378"/>
        <dbReference type="ChEBI" id="CHEBI:17158"/>
        <dbReference type="ChEBI" id="CHEBI:18041"/>
        <dbReference type="ChEBI" id="CHEBI:57783"/>
        <dbReference type="ChEBI" id="CHEBI:58349"/>
        <dbReference type="EC" id="1.1.1.283"/>
    </reaction>
    <physiologicalReaction direction="right-to-left" evidence="4 8 13">
        <dbReference type="Rhea" id="RHEA:21750"/>
    </physiologicalReaction>
</comment>
<comment type="catalytic activity">
    <reaction evidence="8">
        <text>3-methylbutanol + NADP(+) = 3-methylbutanal + NADPH + H(+)</text>
        <dbReference type="Rhea" id="RHEA:18525"/>
        <dbReference type="ChEBI" id="CHEBI:15378"/>
        <dbReference type="ChEBI" id="CHEBI:15837"/>
        <dbReference type="ChEBI" id="CHEBI:16638"/>
        <dbReference type="ChEBI" id="CHEBI:57783"/>
        <dbReference type="ChEBI" id="CHEBI:58349"/>
        <dbReference type="EC" id="1.1.1.265"/>
    </reaction>
    <physiologicalReaction direction="right-to-left" evidence="8">
        <dbReference type="Rhea" id="RHEA:18527"/>
    </physiologicalReaction>
</comment>
<comment type="catalytic activity">
    <reaction evidence="10">
        <text>2,5-hexanedione + 2 NADPH + 2 H(+) = (2S,5S)-hexanediol + 2 NADP(+)</text>
        <dbReference type="Rhea" id="RHEA:81719"/>
        <dbReference type="ChEBI" id="CHEBI:15378"/>
        <dbReference type="ChEBI" id="CHEBI:57783"/>
        <dbReference type="ChEBI" id="CHEBI:58349"/>
        <dbReference type="ChEBI" id="CHEBI:85014"/>
        <dbReference type="ChEBI" id="CHEBI:231969"/>
    </reaction>
    <physiologicalReaction direction="left-to-right" evidence="10">
        <dbReference type="Rhea" id="RHEA:81720"/>
    </physiologicalReaction>
</comment>
<comment type="catalytic activity">
    <reaction evidence="9">
        <text>(S)-3-chloro-1-phenyl-1-propanol + NADP(+) = 3-chloro-1-phenyl-1-propanone + NADPH + H(+)</text>
        <dbReference type="Rhea" id="RHEA:82231"/>
        <dbReference type="ChEBI" id="CHEBI:15378"/>
        <dbReference type="ChEBI" id="CHEBI:57783"/>
        <dbReference type="ChEBI" id="CHEBI:58349"/>
        <dbReference type="ChEBI" id="CHEBI:232113"/>
        <dbReference type="ChEBI" id="CHEBI:232114"/>
    </reaction>
    <physiologicalReaction direction="right-to-left" evidence="9">
        <dbReference type="Rhea" id="RHEA:82233"/>
    </physiologicalReaction>
</comment>
<comment type="activity regulation">
    <text>Activated by glutathione.</text>
</comment>
<comment type="biophysicochemical properties">
    <kinetics>
        <KM evidence="13">5.88 mM for methylglyoxal</KM>
        <KM evidence="13">1.54 mM for phenylglyoxal</KM>
        <KM evidence="12">0.14 mM for 3-methylbutanal</KM>
        <KM evidence="9 10">0.192 mM for 3-chloro-1-phenyl-1-propanol</KM>
        <KM evidence="9 10">4.33 mM for 2,5-hexanedione</KM>
        <KM evidence="9 10">10.48 mM for (2S,5S)-hexanediol</KM>
        <KM evidence="9 10">0.112 mM for NADPH</KM>
        <text>kcat is 31.3 min(-1) with 3-chloro-1-phenyl-1-propanol as substrate and 29.1 min(-1) for NADPH.</text>
    </kinetics>
    <phDependence>
        <text evidence="9 10">Optimum pH is 7 for 2,5-hexanedione reduction, and 10 for the reverse reaction.</text>
    </phDependence>
    <temperatureDependence>
        <text evidence="9 10">Optimum temperature is 40 degrees Celsius for 3-chloro-1-phenyl-1-propanol reduction, and 54 degrees Celsius for 2,5-hexanedione reduction, and 30 degrees Celsius for the reverse reaction.</text>
    </temperatureDependence>
</comment>
<comment type="subunit">
    <text evidence="10">Monomer.</text>
</comment>
<comment type="subcellular location">
    <subcellularLocation>
        <location evidence="5">Cytoplasm</location>
    </subcellularLocation>
    <subcellularLocation>
        <location evidence="5">Nucleus</location>
    </subcellularLocation>
</comment>
<comment type="induction">
    <text evidence="1 2 3 8">Repressed by SKO1. During osmotic stress, this repression is relieved. Induced by transcription factor YAP1 during oxidative stress, and induced by ionic and heat stress. Induced by isoamylalcohol.</text>
</comment>
<comment type="PTM">
    <text>The N-terminus is blocked.</text>
</comment>
<comment type="disruption phenotype">
    <text evidence="8">Causes hyperfilamentation, probably due to the elevated levels of 3-methylbutanal in the mutant.</text>
</comment>
<comment type="biotechnology">
    <text evidence="9 11">Used as a biocatalyst, because the enzyme accepts a broad range of substrates including aliphatic and aromatic ketones, chloroketones, diketones as well as beta-ketoesters which are reduced with high stereoselectivity.</text>
</comment>
<comment type="miscellaneous">
    <text evidence="6">Present with 5458 molecules/cell in log phase SD medium.</text>
</comment>
<comment type="miscellaneous">
    <text>'De respuesta a estres' means stress response in Spanish.</text>
</comment>
<comment type="similarity">
    <text evidence="14">Belongs to the NAD(P)-dependent epimerase/dehydratase family. Dihydroflavonol-4-reductase subfamily.</text>
</comment>
<protein>
    <recommendedName>
        <fullName>NADPH-dependent methylglyoxal reductase GRE2</fullName>
        <ecNumber evidence="4 8 13">1.1.1.283</ecNumber>
    </recommendedName>
    <alternativeName>
        <fullName>3-methylbutanal reductase</fullName>
        <ecNumber evidence="8">1.1.1.265</ecNumber>
    </alternativeName>
    <alternativeName>
        <fullName>Genes de respuesta a estres protein 2</fullName>
    </alternativeName>
    <alternativeName>
        <fullName>Isovaleraldehyde reductase</fullName>
    </alternativeName>
</protein>
<sequence length="342" mass="38170">MSVFVSGANGFIAQHIVDLLLKEDYKVIGSARSQEKAENLTEAFGNNPKFSMEVVPDISKLDAFDHVFQKHGKDIKIVLHTASPFCFDITDSERDLLIPAVNGVKGILHSIKKYAADSVERVVLTSSYAAVFDMAKENDKSLTFNEESWNPATWESCQSDPVNAYCGSKKFAEKAAWEFLEENRDSVKFELTAVNPVYVFGPQMFDKDVKKHLNTSCELVNSLMHLSPEDKIPELFGGYIDVRDVAKAHLVAFQKRETIGQRLIVSEARFTMQDVLDILNEDFPVLKGNIPVGKPGSGATHNTLGATLDNKKSKKLLGFKFRNLKETIDDTASQILKFEGRI</sequence>
<reference key="1">
    <citation type="journal article" date="1995" name="Yeast">
        <title>DNA sequence analysis of a 13 kbp fragment of the left arm of yeast chromosome XV containing seven new open reading frames.</title>
        <authorList>
            <person name="Casamayor A."/>
            <person name="Aldea M."/>
            <person name="Casas C."/>
            <person name="Herrero E."/>
            <person name="Gamo F.-J."/>
            <person name="Lafuente M.J."/>
            <person name="Gancedo C."/>
            <person name="Arino J."/>
        </authorList>
    </citation>
    <scope>NUCLEOTIDE SEQUENCE [GENOMIC DNA]</scope>
    <source>
        <strain>ATCC 96604 / S288c / FY1679</strain>
    </source>
</reference>
<reference key="2">
    <citation type="journal article" date="1997" name="Nature">
        <title>The nucleotide sequence of Saccharomyces cerevisiae chromosome XV.</title>
        <authorList>
            <person name="Dujon B."/>
            <person name="Albermann K."/>
            <person name="Aldea M."/>
            <person name="Alexandraki D."/>
            <person name="Ansorge W."/>
            <person name="Arino J."/>
            <person name="Benes V."/>
            <person name="Bohn C."/>
            <person name="Bolotin-Fukuhara M."/>
            <person name="Bordonne R."/>
            <person name="Boyer J."/>
            <person name="Camasses A."/>
            <person name="Casamayor A."/>
            <person name="Casas C."/>
            <person name="Cheret G."/>
            <person name="Cziepluch C."/>
            <person name="Daignan-Fornier B."/>
            <person name="Dang V.-D."/>
            <person name="de Haan M."/>
            <person name="Delius H."/>
            <person name="Durand P."/>
            <person name="Fairhead C."/>
            <person name="Feldmann H."/>
            <person name="Gaillon L."/>
            <person name="Galisson F."/>
            <person name="Gamo F.-J."/>
            <person name="Gancedo C."/>
            <person name="Goffeau A."/>
            <person name="Goulding S.E."/>
            <person name="Grivell L.A."/>
            <person name="Habbig B."/>
            <person name="Hand N.J."/>
            <person name="Hani J."/>
            <person name="Hattenhorst U."/>
            <person name="Hebling U."/>
            <person name="Hernando Y."/>
            <person name="Herrero E."/>
            <person name="Heumann K."/>
            <person name="Hiesel R."/>
            <person name="Hilger F."/>
            <person name="Hofmann B."/>
            <person name="Hollenberg C.P."/>
            <person name="Hughes B."/>
            <person name="Jauniaux J.-C."/>
            <person name="Kalogeropoulos A."/>
            <person name="Katsoulou C."/>
            <person name="Kordes E."/>
            <person name="Lafuente M.J."/>
            <person name="Landt O."/>
            <person name="Louis E.J."/>
            <person name="Maarse A.C."/>
            <person name="Madania A."/>
            <person name="Mannhaupt G."/>
            <person name="Marck C."/>
            <person name="Martin R.P."/>
            <person name="Mewes H.-W."/>
            <person name="Michaux G."/>
            <person name="Paces V."/>
            <person name="Parle-McDermott A.G."/>
            <person name="Pearson B.M."/>
            <person name="Perrin A."/>
            <person name="Pettersson B."/>
            <person name="Poch O."/>
            <person name="Pohl T.M."/>
            <person name="Poirey R."/>
            <person name="Portetelle D."/>
            <person name="Pujol A."/>
            <person name="Purnelle B."/>
            <person name="Ramezani Rad M."/>
            <person name="Rechmann S."/>
            <person name="Schwager C."/>
            <person name="Schweizer M."/>
            <person name="Sor F."/>
            <person name="Sterky F."/>
            <person name="Tarassov I.A."/>
            <person name="Teodoru C."/>
            <person name="Tettelin H."/>
            <person name="Thierry A."/>
            <person name="Tobiasch E."/>
            <person name="Tzermia M."/>
            <person name="Uhlen M."/>
            <person name="Unseld M."/>
            <person name="Valens M."/>
            <person name="Vandenbol M."/>
            <person name="Vetter I."/>
            <person name="Vlcek C."/>
            <person name="Voet M."/>
            <person name="Volckaert G."/>
            <person name="Voss H."/>
            <person name="Wambutt R."/>
            <person name="Wedler H."/>
            <person name="Wiemann S."/>
            <person name="Winsor B."/>
            <person name="Wolfe K.H."/>
            <person name="Zollner A."/>
            <person name="Zumstein E."/>
            <person name="Kleine K."/>
        </authorList>
    </citation>
    <scope>NUCLEOTIDE SEQUENCE [LARGE SCALE GENOMIC DNA]</scope>
    <source>
        <strain>ATCC 204508 / S288c</strain>
    </source>
</reference>
<reference key="3">
    <citation type="journal article" date="2014" name="G3 (Bethesda)">
        <title>The reference genome sequence of Saccharomyces cerevisiae: Then and now.</title>
        <authorList>
            <person name="Engel S.R."/>
            <person name="Dietrich F.S."/>
            <person name="Fisk D.G."/>
            <person name="Binkley G."/>
            <person name="Balakrishnan R."/>
            <person name="Costanzo M.C."/>
            <person name="Dwight S.S."/>
            <person name="Hitz B.C."/>
            <person name="Karra K."/>
            <person name="Nash R.S."/>
            <person name="Weng S."/>
            <person name="Wong E.D."/>
            <person name="Lloyd P."/>
            <person name="Skrzypek M.S."/>
            <person name="Miyasato S.R."/>
            <person name="Simison M."/>
            <person name="Cherry J.M."/>
        </authorList>
    </citation>
    <scope>GENOME REANNOTATION</scope>
    <source>
        <strain>ATCC 204508 / S288c</strain>
    </source>
</reference>
<reference key="4">
    <citation type="journal article" date="2007" name="Genome Res.">
        <title>Approaching a complete repository of sequence-verified protein-encoding clones for Saccharomyces cerevisiae.</title>
        <authorList>
            <person name="Hu Y."/>
            <person name="Rolfs A."/>
            <person name="Bhullar B."/>
            <person name="Murthy T.V.S."/>
            <person name="Zhu C."/>
            <person name="Berger M.F."/>
            <person name="Camargo A.A."/>
            <person name="Kelley F."/>
            <person name="McCarron S."/>
            <person name="Jepson D."/>
            <person name="Richardson A."/>
            <person name="Raphael J."/>
            <person name="Moreira D."/>
            <person name="Taycher E."/>
            <person name="Zuo D."/>
            <person name="Mohr S."/>
            <person name="Kane M.F."/>
            <person name="Williamson J."/>
            <person name="Simpson A.J.G."/>
            <person name="Bulyk M.L."/>
            <person name="Harlow E."/>
            <person name="Marsischky G."/>
            <person name="Kolodner R.D."/>
            <person name="LaBaer J."/>
        </authorList>
    </citation>
    <scope>NUCLEOTIDE SEQUENCE [GENOMIC DNA]</scope>
    <source>
        <strain>ATCC 204508 / S288c</strain>
    </source>
</reference>
<reference key="5">
    <citation type="journal article" date="1985" name="Eur. J. Biochem.">
        <title>Metabolism of 2-oxoaldehyde in yeasts. Purification and characterization of NADPH-dependent methylglyoxal-reducing enzyme from Saccharomyces cerevisiae.</title>
        <authorList>
            <person name="Murata K."/>
            <person name="Fukuda Y."/>
            <person name="Simosaka M."/>
            <person name="Watanabe K."/>
            <person name="Saikusa T."/>
            <person name="Kimura A."/>
        </authorList>
    </citation>
    <scope>FUNCTION</scope>
    <scope>CATALYTIC ACTIVITY</scope>
    <scope>BIOPHYSICOCHEMICAL PROPERTIES</scope>
</reference>
<reference key="6">
    <citation type="journal article" date="2003" name="Yeast">
        <title>Associating protein activities with their genes: rapid identification of a gene encoding a methylglyoxal reductase in the yeast Saccharomyces cerevisiae.</title>
        <authorList>
            <person name="Chen C.N."/>
            <person name="Porubleva L."/>
            <person name="Shearer G."/>
            <person name="Svrakic M."/>
            <person name="Holden L.G."/>
            <person name="Dover J.L."/>
            <person name="Johnston M."/>
            <person name="Chitnis P.R."/>
            <person name="Kohl D.H."/>
        </authorList>
    </citation>
    <scope>FUNCTION</scope>
    <scope>CATALYTIC ACTIVITY</scope>
</reference>
<reference key="7">
    <citation type="journal article" date="1999" name="Yeast">
        <title>Three genes whose expression is induced by stress in Saccharomyces cerevisiae.</title>
        <authorList>
            <person name="Garay-Arroyo A."/>
            <person name="Covarrubias A.A."/>
        </authorList>
    </citation>
    <scope>INDUCTION</scope>
</reference>
<reference key="8">
    <citation type="journal article" date="1999" name="J. Biol. Chem.">
        <title>Yap1 and Skn7 control two specialized oxidative stress response regulons in yeast.</title>
        <authorList>
            <person name="Lee J."/>
            <person name="Godon C."/>
            <person name="Lagniel G."/>
            <person name="Spector D."/>
            <person name="Garin J."/>
            <person name="Labarre J."/>
            <person name="Toledano M.B."/>
        </authorList>
    </citation>
    <scope>INDUCTION</scope>
</reference>
<reference key="9">
    <citation type="journal article" date="2001" name="Mol. Microbiol.">
        <title>The Saccharomyces cerevisiae Sko1p transcription factor mediates HOG pathway-dependent osmotic regulation of a set of genes encoding enzymes implicated in protection from oxidative damage.</title>
        <authorList>
            <person name="Rep M."/>
            <person name="Proft M."/>
            <person name="Remize F."/>
            <person name="Tamas M."/>
            <person name="Serrano R."/>
            <person name="Thevelein J.M."/>
            <person name="Hohmann S."/>
        </authorList>
    </citation>
    <scope>INDUCTION</scope>
</reference>
<reference key="10">
    <citation type="journal article" date="2003" name="Nature">
        <title>Global analysis of protein localization in budding yeast.</title>
        <authorList>
            <person name="Huh W.-K."/>
            <person name="Falvo J.V."/>
            <person name="Gerke L.C."/>
            <person name="Carroll A.S."/>
            <person name="Howson R.W."/>
            <person name="Weissman J.S."/>
            <person name="O'Shea E.K."/>
        </authorList>
    </citation>
    <scope>SUBCELLULAR LOCATION [LARGE SCALE ANALYSIS]</scope>
</reference>
<reference key="11">
    <citation type="journal article" date="2003" name="Nature">
        <title>Global analysis of protein expression in yeast.</title>
        <authorList>
            <person name="Ghaemmaghami S."/>
            <person name="Huh W.-K."/>
            <person name="Bower K."/>
            <person name="Howson R.W."/>
            <person name="Belle A."/>
            <person name="Dephoure N."/>
            <person name="O'Shea E.K."/>
            <person name="Weissman J.S."/>
        </authorList>
    </citation>
    <scope>LEVEL OF PROTEIN EXPRESSION [LARGE SCALE ANALYSIS]</scope>
</reference>
<reference key="12">
    <citation type="journal article" date="2006" name="Yeast">
        <title>Involvement of yeast YOL151W/GRE2 in ergosterol metabolism.</title>
        <authorList>
            <person name="Warringer J."/>
            <person name="Blomberg A."/>
        </authorList>
    </citation>
    <scope>FUNCTION</scope>
</reference>
<reference key="13">
    <citation type="journal article" date="2007" name="FEMS Yeast Res.">
        <title>A transcriptome analysis of isoamyl alcohol-induced filamentation in yeast reveals a novel role for Gre2p as isovaleraldehyde reductase.</title>
        <authorList>
            <person name="Hauser M."/>
            <person name="Horn P."/>
            <person name="Tournu H."/>
            <person name="Hauser N.C."/>
            <person name="Hoheisel J.D."/>
            <person name="Brown A.J."/>
            <person name="Dickinson J.R."/>
        </authorList>
    </citation>
    <scope>FUNCTION</scope>
    <scope>CATALYTIC ACTIVITY</scope>
    <scope>INDUCTION</scope>
    <scope>DISRUPTION PHENOTYPE</scope>
</reference>
<reference key="14">
    <citation type="journal article" date="2008" name="Mol. Cell. Proteomics">
        <title>A multidimensional chromatography technology for in-depth phosphoproteome analysis.</title>
        <authorList>
            <person name="Albuquerque C.P."/>
            <person name="Smolka M.B."/>
            <person name="Payne S.H."/>
            <person name="Bafna V."/>
            <person name="Eng J."/>
            <person name="Zhou H."/>
        </authorList>
    </citation>
    <scope>PHOSPHORYLATION [LARGE SCALE ANALYSIS] AT SER-333</scope>
    <scope>IDENTIFICATION BY MASS SPECTROMETRY [LARGE SCALE ANALYSIS]</scope>
</reference>
<reference key="15">
    <citation type="journal article" date="2010" name="Appl. Microbiol. Biotechnol.">
        <title>Asymmetric synthesis of (S)-3-chloro-1-phenyl-1-propanol using Saccharomyces cerevisiae reductase with high enantioselectivity.</title>
        <authorList>
            <person name="Choi Y.H."/>
            <person name="Choi H.J."/>
            <person name="Kim D."/>
            <person name="Uhm K.N."/>
            <person name="Kim H.K."/>
        </authorList>
    </citation>
    <scope>BIOPHYSICOCHEMICAL PROPERTIES</scope>
    <scope>BIOTECHNOLOGY</scope>
</reference>
<reference key="16">
    <citation type="journal article" date="2010" name="Int. J. Mol. Sci.">
        <title>Engineering cofactor preference of ketone reducing biocatalysts: A mutagenesis study on a gamma-diketone reductase from the yeast Saccharomyces cerevisiae serving as an example.</title>
        <authorList>
            <person name="Katzberg M."/>
            <person name="Skorupa-Parachin N."/>
            <person name="Gorwa-Grauslund M.F."/>
            <person name="Bertau M."/>
        </authorList>
    </citation>
    <scope>BIOTECHNOLOGY</scope>
    <scope>MUTAGENESIS OF ASN-9</scope>
</reference>
<reference key="17">
    <citation type="journal article" date="2010" name="Org. Biomol. Chem.">
        <title>Highly efficient and stereoselective biosynthesis of (2S,5S)-hexanediol with a dehydrogenase from Saccharomyces cerevisiae.</title>
        <authorList>
            <person name="Muller M."/>
            <person name="Katzberg M."/>
            <person name="Bertau M."/>
            <person name="Hummel W."/>
        </authorList>
    </citation>
    <scope>BIOPHYSICOCHEMICAL PROPERTIES</scope>
    <scope>IDENTIFICATION BY MASS SPECTROMETRY</scope>
    <scope>SUBUNIT</scope>
    <scope>SUBSTRATE SPECIFICITY</scope>
</reference>
<reference key="18">
    <citation type="journal article" date="2014" name="Biochim. Biophys. Acta">
        <title>Structural insights into the cofactor-assisted substrate recognition of yeast methylglyoxal/isovaleraldehyde reductase Gre2.</title>
        <authorList>
            <person name="Guo P.C."/>
            <person name="Bao Z.Z."/>
            <person name="Ma X.X."/>
            <person name="Xia Q."/>
            <person name="Li W.F."/>
        </authorList>
    </citation>
    <scope>X-RAY CRYSTALLOGRAPHY (2.00 ANGSTROMS) IN COMPLEX WITH NADP</scope>
    <scope>BIOPHYSICOCHEMICAL PROPERTIES</scope>
    <scope>ACTIVE SITE</scope>
</reference>
<proteinExistence type="evidence at protein level"/>
<feature type="chain" id="PRO_0000215576" description="NADPH-dependent methylglyoxal reductase GRE2">
    <location>
        <begin position="1"/>
        <end position="342"/>
    </location>
</feature>
<feature type="active site" description="Proton donor" evidence="15">
    <location>
        <position position="169"/>
    </location>
</feature>
<feature type="binding site" evidence="12">
    <location>
        <begin position="7"/>
        <end position="12"/>
    </location>
    <ligand>
        <name>NADP(+)</name>
        <dbReference type="ChEBI" id="CHEBI:58349"/>
    </ligand>
</feature>
<feature type="binding site" evidence="12">
    <location>
        <position position="32"/>
    </location>
    <ligand>
        <name>NADP(+)</name>
        <dbReference type="ChEBI" id="CHEBI:58349"/>
    </ligand>
</feature>
<feature type="binding site" evidence="12">
    <location>
        <position position="36"/>
    </location>
    <ligand>
        <name>NADP(+)</name>
        <dbReference type="ChEBI" id="CHEBI:58349"/>
    </ligand>
</feature>
<feature type="binding site" evidence="12">
    <location>
        <begin position="57"/>
        <end position="58"/>
    </location>
    <ligand>
        <name>NADP(+)</name>
        <dbReference type="ChEBI" id="CHEBI:58349"/>
    </ligand>
</feature>
<feature type="binding site" evidence="12">
    <location>
        <position position="165"/>
    </location>
    <ligand>
        <name>NADP(+)</name>
        <dbReference type="ChEBI" id="CHEBI:58349"/>
    </ligand>
</feature>
<feature type="binding site" evidence="12">
    <location>
        <position position="169"/>
    </location>
    <ligand>
        <name>NADP(+)</name>
        <dbReference type="ChEBI" id="CHEBI:58349"/>
    </ligand>
</feature>
<feature type="binding site" evidence="12">
    <location>
        <position position="199"/>
    </location>
    <ligand>
        <name>NADP(+)</name>
        <dbReference type="ChEBI" id="CHEBI:58349"/>
    </ligand>
</feature>
<feature type="binding site" evidence="12">
    <location>
        <position position="216"/>
    </location>
    <ligand>
        <name>NADP(+)</name>
        <dbReference type="ChEBI" id="CHEBI:58349"/>
    </ligand>
</feature>
<feature type="modified residue" description="Phosphoserine" evidence="16">
    <location>
        <position position="333"/>
    </location>
</feature>
<feature type="mutagenesis site" description="Alters cofactor preference of the enzyme to be able to use as well NAD instead of NADP." evidence="11">
    <original>N</original>
    <variation>E</variation>
    <location>
        <position position="9"/>
    </location>
</feature>
<feature type="strand" evidence="17">
    <location>
        <begin position="3"/>
        <end position="6"/>
    </location>
</feature>
<feature type="turn" evidence="17">
    <location>
        <begin position="7"/>
        <end position="9"/>
    </location>
</feature>
<feature type="helix" evidence="17">
    <location>
        <begin position="11"/>
        <end position="22"/>
    </location>
</feature>
<feature type="strand" evidence="17">
    <location>
        <begin position="27"/>
        <end position="33"/>
    </location>
</feature>
<feature type="helix" evidence="17">
    <location>
        <begin position="34"/>
        <end position="43"/>
    </location>
</feature>
<feature type="strand" evidence="17">
    <location>
        <begin position="50"/>
        <end position="54"/>
    </location>
</feature>
<feature type="turn" evidence="17">
    <location>
        <begin position="61"/>
        <end position="64"/>
    </location>
</feature>
<feature type="helix" evidence="17">
    <location>
        <begin position="65"/>
        <end position="71"/>
    </location>
</feature>
<feature type="turn" evidence="17">
    <location>
        <begin position="72"/>
        <end position="74"/>
    </location>
</feature>
<feature type="strand" evidence="17">
    <location>
        <begin position="77"/>
        <end position="80"/>
    </location>
</feature>
<feature type="strand" evidence="17">
    <location>
        <begin position="89"/>
        <end position="91"/>
    </location>
</feature>
<feature type="helix" evidence="17">
    <location>
        <begin position="92"/>
        <end position="95"/>
    </location>
</feature>
<feature type="helix" evidence="17">
    <location>
        <begin position="97"/>
        <end position="114"/>
    </location>
</feature>
<feature type="turn" evidence="17">
    <location>
        <begin position="116"/>
        <end position="118"/>
    </location>
</feature>
<feature type="strand" evidence="17">
    <location>
        <begin position="121"/>
        <end position="125"/>
    </location>
</feature>
<feature type="helix" evidence="17">
    <location>
        <begin position="128"/>
        <end position="130"/>
    </location>
</feature>
<feature type="helix" evidence="17">
    <location>
        <begin position="134"/>
        <end position="136"/>
    </location>
</feature>
<feature type="strand" evidence="17">
    <location>
        <begin position="143"/>
        <end position="145"/>
    </location>
</feature>
<feature type="helix" evidence="17">
    <location>
        <begin position="156"/>
        <end position="159"/>
    </location>
</feature>
<feature type="helix" evidence="17">
    <location>
        <begin position="161"/>
        <end position="182"/>
    </location>
</feature>
<feature type="turn" evidence="17">
    <location>
        <begin position="183"/>
        <end position="186"/>
    </location>
</feature>
<feature type="strand" evidence="17">
    <location>
        <begin position="190"/>
        <end position="196"/>
    </location>
</feature>
<feature type="strand" evidence="17">
    <location>
        <begin position="198"/>
        <end position="201"/>
    </location>
</feature>
<feature type="helix" evidence="17">
    <location>
        <begin position="206"/>
        <end position="210"/>
    </location>
</feature>
<feature type="helix" evidence="17">
    <location>
        <begin position="215"/>
        <end position="224"/>
    </location>
</feature>
<feature type="strand" evidence="17">
    <location>
        <begin position="236"/>
        <end position="241"/>
    </location>
</feature>
<feature type="helix" evidence="17">
    <location>
        <begin position="242"/>
        <end position="254"/>
    </location>
</feature>
<feature type="turn" evidence="17">
    <location>
        <begin position="257"/>
        <end position="260"/>
    </location>
</feature>
<feature type="strand" evidence="17">
    <location>
        <begin position="262"/>
        <end position="265"/>
    </location>
</feature>
<feature type="strand" evidence="17">
    <location>
        <begin position="268"/>
        <end position="271"/>
    </location>
</feature>
<feature type="helix" evidence="17">
    <location>
        <begin position="272"/>
        <end position="282"/>
    </location>
</feature>
<feature type="turn" evidence="17">
    <location>
        <begin position="284"/>
        <end position="289"/>
    </location>
</feature>
<feature type="turn" evidence="17">
    <location>
        <begin position="299"/>
        <end position="301"/>
    </location>
</feature>
<feature type="strand" evidence="17">
    <location>
        <begin position="307"/>
        <end position="309"/>
    </location>
</feature>
<feature type="helix" evidence="17">
    <location>
        <begin position="311"/>
        <end position="317"/>
    </location>
</feature>
<feature type="helix" evidence="17">
    <location>
        <begin position="324"/>
        <end position="338"/>
    </location>
</feature>
<dbReference type="EC" id="1.1.1.283" evidence="4 8 13"/>
<dbReference type="EC" id="1.1.1.265" evidence="8"/>
<dbReference type="EMBL" id="Z48239">
    <property type="protein sequence ID" value="CAA88277.1"/>
    <property type="molecule type" value="Genomic_DNA"/>
</dbReference>
<dbReference type="EMBL" id="Z74893">
    <property type="protein sequence ID" value="CAA99172.1"/>
    <property type="molecule type" value="Genomic_DNA"/>
</dbReference>
<dbReference type="EMBL" id="AY558040">
    <property type="protein sequence ID" value="AAS56366.1"/>
    <property type="molecule type" value="Genomic_DNA"/>
</dbReference>
<dbReference type="EMBL" id="BK006948">
    <property type="protein sequence ID" value="DAA10635.1"/>
    <property type="molecule type" value="Genomic_DNA"/>
</dbReference>
<dbReference type="PIR" id="S60386">
    <property type="entry name" value="S60386"/>
</dbReference>
<dbReference type="RefSeq" id="NP_014490.1">
    <property type="nucleotide sequence ID" value="NM_001183405.1"/>
</dbReference>
<dbReference type="PDB" id="4PVC">
    <property type="method" value="X-ray"/>
    <property type="resolution" value="2.00 A"/>
    <property type="chains" value="A/B=1-342"/>
</dbReference>
<dbReference type="PDB" id="4PVD">
    <property type="method" value="X-ray"/>
    <property type="resolution" value="2.40 A"/>
    <property type="chains" value="A/B/C/D=1-342"/>
</dbReference>
<dbReference type="PDBsum" id="4PVC"/>
<dbReference type="PDBsum" id="4PVD"/>
<dbReference type="SMR" id="Q12068"/>
<dbReference type="BioGRID" id="34267">
    <property type="interactions" value="70"/>
</dbReference>
<dbReference type="DIP" id="DIP-2645N"/>
<dbReference type="FunCoup" id="Q12068">
    <property type="interactions" value="329"/>
</dbReference>
<dbReference type="IntAct" id="Q12068">
    <property type="interactions" value="8"/>
</dbReference>
<dbReference type="MINT" id="Q12068"/>
<dbReference type="STRING" id="4932.YOL151W"/>
<dbReference type="iPTMnet" id="Q12068"/>
<dbReference type="PaxDb" id="4932-YOL151W"/>
<dbReference type="PeptideAtlas" id="Q12068"/>
<dbReference type="EnsemblFungi" id="YOL151W_mRNA">
    <property type="protein sequence ID" value="YOL151W"/>
    <property type="gene ID" value="YOL151W"/>
</dbReference>
<dbReference type="GeneID" id="854014"/>
<dbReference type="KEGG" id="sce:YOL151W"/>
<dbReference type="AGR" id="SGD:S000005511"/>
<dbReference type="SGD" id="S000005511">
    <property type="gene designation" value="GRE2"/>
</dbReference>
<dbReference type="VEuPathDB" id="FungiDB:YOL151W"/>
<dbReference type="eggNOG" id="KOG1502">
    <property type="taxonomic scope" value="Eukaryota"/>
</dbReference>
<dbReference type="GeneTree" id="ENSGT00940000176317"/>
<dbReference type="HOGENOM" id="CLU_007383_9_2_1"/>
<dbReference type="InParanoid" id="Q12068"/>
<dbReference type="OMA" id="IGREFRF"/>
<dbReference type="OrthoDB" id="2735536at2759"/>
<dbReference type="BioCyc" id="MetaCyc:YOL151W-MONOMER"/>
<dbReference type="BioCyc" id="YEAST:YOL151W-MONOMER"/>
<dbReference type="BRENDA" id="1.1.1.265">
    <property type="organism ID" value="984"/>
</dbReference>
<dbReference type="BRENDA" id="1.1.1.283">
    <property type="organism ID" value="984"/>
</dbReference>
<dbReference type="SABIO-RK" id="Q12068"/>
<dbReference type="BioGRID-ORCS" id="854014">
    <property type="hits" value="0 hits in 10 CRISPR screens"/>
</dbReference>
<dbReference type="EvolutionaryTrace" id="Q12068"/>
<dbReference type="PRO" id="PR:Q12068"/>
<dbReference type="Proteomes" id="UP000002311">
    <property type="component" value="Chromosome XV"/>
</dbReference>
<dbReference type="RNAct" id="Q12068">
    <property type="molecule type" value="protein"/>
</dbReference>
<dbReference type="GO" id="GO:0005737">
    <property type="term" value="C:cytoplasm"/>
    <property type="evidence" value="ECO:0000314"/>
    <property type="project" value="SGD"/>
</dbReference>
<dbReference type="GO" id="GO:0005634">
    <property type="term" value="C:nucleus"/>
    <property type="evidence" value="ECO:0000314"/>
    <property type="project" value="SGD"/>
</dbReference>
<dbReference type="GO" id="GO:0052675">
    <property type="term" value="F:3-methylbutanal reductase (NADPH) activity"/>
    <property type="evidence" value="ECO:0007669"/>
    <property type="project" value="RHEA"/>
</dbReference>
<dbReference type="GO" id="GO:0046568">
    <property type="term" value="F:3-methylbutanal reductase [NAD(P)H] activity"/>
    <property type="evidence" value="ECO:0000315"/>
    <property type="project" value="SGD"/>
</dbReference>
<dbReference type="GO" id="GO:0043892">
    <property type="term" value="F:methylglyoxal reductase (NADPH) activity"/>
    <property type="evidence" value="ECO:0000314"/>
    <property type="project" value="SGD"/>
</dbReference>
<dbReference type="GO" id="GO:0016616">
    <property type="term" value="F:oxidoreductase activity, acting on the CH-OH group of donors, NAD or NADP as acceptor"/>
    <property type="evidence" value="ECO:0000318"/>
    <property type="project" value="GO_Central"/>
</dbReference>
<dbReference type="GO" id="GO:0008204">
    <property type="term" value="P:ergosterol metabolic process"/>
    <property type="evidence" value="ECO:0000315"/>
    <property type="project" value="SGD"/>
</dbReference>
<dbReference type="GO" id="GO:0030447">
    <property type="term" value="P:filamentous growth"/>
    <property type="evidence" value="ECO:0000315"/>
    <property type="project" value="SGD"/>
</dbReference>
<dbReference type="GO" id="GO:0006694">
    <property type="term" value="P:steroid biosynthetic process"/>
    <property type="evidence" value="ECO:0007669"/>
    <property type="project" value="InterPro"/>
</dbReference>
<dbReference type="CDD" id="cd05227">
    <property type="entry name" value="AR_SDR_e"/>
    <property type="match status" value="1"/>
</dbReference>
<dbReference type="FunFam" id="3.40.50.720:FF:000191">
    <property type="entry name" value="Methylglyoxal reductase (NADPH-dependent)"/>
    <property type="match status" value="1"/>
</dbReference>
<dbReference type="Gene3D" id="3.40.50.720">
    <property type="entry name" value="NAD(P)-binding Rossmann-like Domain"/>
    <property type="match status" value="1"/>
</dbReference>
<dbReference type="InterPro" id="IPR002225">
    <property type="entry name" value="3Beta_OHSteriod_DH/Estase"/>
</dbReference>
<dbReference type="InterPro" id="IPR036291">
    <property type="entry name" value="NAD(P)-bd_dom_sf"/>
</dbReference>
<dbReference type="InterPro" id="IPR050425">
    <property type="entry name" value="NAD(P)_dehydrat-like"/>
</dbReference>
<dbReference type="PANTHER" id="PTHR10366">
    <property type="entry name" value="NAD DEPENDENT EPIMERASE/DEHYDRATASE"/>
    <property type="match status" value="1"/>
</dbReference>
<dbReference type="PANTHER" id="PTHR10366:SF844">
    <property type="entry name" value="NADPH-DEPENDENT METHYLGLYOXAL REDUCTASE GRE2"/>
    <property type="match status" value="1"/>
</dbReference>
<dbReference type="Pfam" id="PF01073">
    <property type="entry name" value="3Beta_HSD"/>
    <property type="match status" value="1"/>
</dbReference>
<dbReference type="SUPFAM" id="SSF51735">
    <property type="entry name" value="NAD(P)-binding Rossmann-fold domains"/>
    <property type="match status" value="1"/>
</dbReference>
<name>GRE2_YEAST</name>
<keyword id="KW-0002">3D-structure</keyword>
<keyword id="KW-0963">Cytoplasm</keyword>
<keyword id="KW-0521">NADP</keyword>
<keyword id="KW-0539">Nucleus</keyword>
<keyword id="KW-0560">Oxidoreductase</keyword>
<keyword id="KW-0597">Phosphoprotein</keyword>
<keyword id="KW-1185">Reference proteome</keyword>